<proteinExistence type="inferred from homology"/>
<sequence>MNIQALLSEKVSQAMIAAGAPADCEPQVRQSAKVQFGDYQANGMMAVAKKLGMAPRQLAEQVLTHLDLSGIASKVEIAGPGFINIFLEPAFLAEQVQQALASERLGVSQPTRQTIVVDYSAPNVAKEMHVGHLRSTIIGDAAVRTLEFLGHHVIRANHVGDWGTQFGMLIAWLEKQQQENAGDMALADLEGFYRDAKKHYDEDEAFAERARNYVVKLQSGDTYFREMWRKLVDITMTQNQITYDRLNVTLTRDDVMGESLYNPMLPGIVADLKAKGLAVESEGATVVFLDEFKNKEGDPMGVIIQKKDGGYLYTTTDIACAKYRYETLHADRVLYYIDSRQHQHLMQAWTIVRKAGYVPDSVPLEHHMFGMMLGKDGKPFKTRAGGTVKLADLLDEALERARRLVAEKNPDMPADELEKLANAVGIGAVKYADLSKNRTTDYIFDWDNMLAFEGNTAPYMQYAYTRVLSVFRKADIDEQALASAPVIISEDREAQLAARLLQFEETLTVVAREGTPHVMCAYLYDVAGLFSGFYEHCPILSAENDAVRNSRLKLAQLTAKTLKLGLDTLGIETVERM</sequence>
<gene>
    <name evidence="1" type="primary">argS</name>
    <name type="ordered locus">SeSA_A2064</name>
</gene>
<dbReference type="EC" id="6.1.1.19" evidence="1"/>
<dbReference type="EMBL" id="CP001127">
    <property type="protein sequence ID" value="ACF92152.1"/>
    <property type="molecule type" value="Genomic_DNA"/>
</dbReference>
<dbReference type="RefSeq" id="WP_001025365.1">
    <property type="nucleotide sequence ID" value="NC_011094.1"/>
</dbReference>
<dbReference type="SMR" id="B4TYT3"/>
<dbReference type="KEGG" id="sew:SeSA_A2064"/>
<dbReference type="HOGENOM" id="CLU_006406_5_1_6"/>
<dbReference type="Proteomes" id="UP000001865">
    <property type="component" value="Chromosome"/>
</dbReference>
<dbReference type="GO" id="GO:0005737">
    <property type="term" value="C:cytoplasm"/>
    <property type="evidence" value="ECO:0007669"/>
    <property type="project" value="UniProtKB-SubCell"/>
</dbReference>
<dbReference type="GO" id="GO:0004814">
    <property type="term" value="F:arginine-tRNA ligase activity"/>
    <property type="evidence" value="ECO:0007669"/>
    <property type="project" value="UniProtKB-UniRule"/>
</dbReference>
<dbReference type="GO" id="GO:0005524">
    <property type="term" value="F:ATP binding"/>
    <property type="evidence" value="ECO:0007669"/>
    <property type="project" value="UniProtKB-UniRule"/>
</dbReference>
<dbReference type="GO" id="GO:0006420">
    <property type="term" value="P:arginyl-tRNA aminoacylation"/>
    <property type="evidence" value="ECO:0007669"/>
    <property type="project" value="UniProtKB-UniRule"/>
</dbReference>
<dbReference type="CDD" id="cd07956">
    <property type="entry name" value="Anticodon_Ia_Arg"/>
    <property type="match status" value="1"/>
</dbReference>
<dbReference type="CDD" id="cd00671">
    <property type="entry name" value="ArgRS_core"/>
    <property type="match status" value="1"/>
</dbReference>
<dbReference type="FunFam" id="1.10.730.10:FF:000001">
    <property type="entry name" value="Arginine--tRNA ligase"/>
    <property type="match status" value="1"/>
</dbReference>
<dbReference type="FunFam" id="3.30.1360.70:FF:000001">
    <property type="entry name" value="Arginine--tRNA ligase"/>
    <property type="match status" value="1"/>
</dbReference>
<dbReference type="FunFam" id="3.40.50.620:FF:000030">
    <property type="entry name" value="Arginine--tRNA ligase"/>
    <property type="match status" value="1"/>
</dbReference>
<dbReference type="Gene3D" id="3.30.1360.70">
    <property type="entry name" value="Arginyl tRNA synthetase N-terminal domain"/>
    <property type="match status" value="1"/>
</dbReference>
<dbReference type="Gene3D" id="3.40.50.620">
    <property type="entry name" value="HUPs"/>
    <property type="match status" value="1"/>
</dbReference>
<dbReference type="Gene3D" id="1.10.730.10">
    <property type="entry name" value="Isoleucyl-tRNA Synthetase, Domain 1"/>
    <property type="match status" value="1"/>
</dbReference>
<dbReference type="HAMAP" id="MF_00123">
    <property type="entry name" value="Arg_tRNA_synth"/>
    <property type="match status" value="1"/>
</dbReference>
<dbReference type="InterPro" id="IPR001412">
    <property type="entry name" value="aa-tRNA-synth_I_CS"/>
</dbReference>
<dbReference type="InterPro" id="IPR001278">
    <property type="entry name" value="Arg-tRNA-ligase"/>
</dbReference>
<dbReference type="InterPro" id="IPR005148">
    <property type="entry name" value="Arg-tRNA-synth_N"/>
</dbReference>
<dbReference type="InterPro" id="IPR036695">
    <property type="entry name" value="Arg-tRNA-synth_N_sf"/>
</dbReference>
<dbReference type="InterPro" id="IPR035684">
    <property type="entry name" value="ArgRS_core"/>
</dbReference>
<dbReference type="InterPro" id="IPR008909">
    <property type="entry name" value="DALR_anticod-bd"/>
</dbReference>
<dbReference type="InterPro" id="IPR014729">
    <property type="entry name" value="Rossmann-like_a/b/a_fold"/>
</dbReference>
<dbReference type="InterPro" id="IPR009080">
    <property type="entry name" value="tRNAsynth_Ia_anticodon-bd"/>
</dbReference>
<dbReference type="NCBIfam" id="TIGR00456">
    <property type="entry name" value="argS"/>
    <property type="match status" value="1"/>
</dbReference>
<dbReference type="PANTHER" id="PTHR11956:SF5">
    <property type="entry name" value="ARGININE--TRNA LIGASE, CYTOPLASMIC"/>
    <property type="match status" value="1"/>
</dbReference>
<dbReference type="PANTHER" id="PTHR11956">
    <property type="entry name" value="ARGINYL-TRNA SYNTHETASE"/>
    <property type="match status" value="1"/>
</dbReference>
<dbReference type="Pfam" id="PF03485">
    <property type="entry name" value="Arg_tRNA_synt_N"/>
    <property type="match status" value="1"/>
</dbReference>
<dbReference type="Pfam" id="PF05746">
    <property type="entry name" value="DALR_1"/>
    <property type="match status" value="1"/>
</dbReference>
<dbReference type="Pfam" id="PF00750">
    <property type="entry name" value="tRNA-synt_1d"/>
    <property type="match status" value="1"/>
</dbReference>
<dbReference type="PRINTS" id="PR01038">
    <property type="entry name" value="TRNASYNTHARG"/>
</dbReference>
<dbReference type="SMART" id="SM01016">
    <property type="entry name" value="Arg_tRNA_synt_N"/>
    <property type="match status" value="1"/>
</dbReference>
<dbReference type="SMART" id="SM00836">
    <property type="entry name" value="DALR_1"/>
    <property type="match status" value="1"/>
</dbReference>
<dbReference type="SUPFAM" id="SSF47323">
    <property type="entry name" value="Anticodon-binding domain of a subclass of class I aminoacyl-tRNA synthetases"/>
    <property type="match status" value="1"/>
</dbReference>
<dbReference type="SUPFAM" id="SSF55190">
    <property type="entry name" value="Arginyl-tRNA synthetase (ArgRS), N-terminal 'additional' domain"/>
    <property type="match status" value="1"/>
</dbReference>
<dbReference type="SUPFAM" id="SSF52374">
    <property type="entry name" value="Nucleotidylyl transferase"/>
    <property type="match status" value="1"/>
</dbReference>
<dbReference type="PROSITE" id="PS00178">
    <property type="entry name" value="AA_TRNA_LIGASE_I"/>
    <property type="match status" value="1"/>
</dbReference>
<accession>B4TYT3</accession>
<name>SYR_SALSV</name>
<comment type="catalytic activity">
    <reaction evidence="1">
        <text>tRNA(Arg) + L-arginine + ATP = L-arginyl-tRNA(Arg) + AMP + diphosphate</text>
        <dbReference type="Rhea" id="RHEA:20301"/>
        <dbReference type="Rhea" id="RHEA-COMP:9658"/>
        <dbReference type="Rhea" id="RHEA-COMP:9673"/>
        <dbReference type="ChEBI" id="CHEBI:30616"/>
        <dbReference type="ChEBI" id="CHEBI:32682"/>
        <dbReference type="ChEBI" id="CHEBI:33019"/>
        <dbReference type="ChEBI" id="CHEBI:78442"/>
        <dbReference type="ChEBI" id="CHEBI:78513"/>
        <dbReference type="ChEBI" id="CHEBI:456215"/>
        <dbReference type="EC" id="6.1.1.19"/>
    </reaction>
</comment>
<comment type="subunit">
    <text evidence="1">Monomer.</text>
</comment>
<comment type="subcellular location">
    <subcellularLocation>
        <location evidence="1">Cytoplasm</location>
    </subcellularLocation>
</comment>
<comment type="similarity">
    <text evidence="1">Belongs to the class-I aminoacyl-tRNA synthetase family.</text>
</comment>
<evidence type="ECO:0000255" key="1">
    <source>
        <dbReference type="HAMAP-Rule" id="MF_00123"/>
    </source>
</evidence>
<reference key="1">
    <citation type="journal article" date="2011" name="J. Bacteriol.">
        <title>Comparative genomics of 28 Salmonella enterica isolates: evidence for CRISPR-mediated adaptive sublineage evolution.</title>
        <authorList>
            <person name="Fricke W.F."/>
            <person name="Mammel M.K."/>
            <person name="McDermott P.F."/>
            <person name="Tartera C."/>
            <person name="White D.G."/>
            <person name="Leclerc J.E."/>
            <person name="Ravel J."/>
            <person name="Cebula T.A."/>
        </authorList>
    </citation>
    <scope>NUCLEOTIDE SEQUENCE [LARGE SCALE GENOMIC DNA]</scope>
    <source>
        <strain>CVM19633</strain>
    </source>
</reference>
<protein>
    <recommendedName>
        <fullName evidence="1">Arginine--tRNA ligase</fullName>
        <ecNumber evidence="1">6.1.1.19</ecNumber>
    </recommendedName>
    <alternativeName>
        <fullName evidence="1">Arginyl-tRNA synthetase</fullName>
        <shortName evidence="1">ArgRS</shortName>
    </alternativeName>
</protein>
<feature type="chain" id="PRO_1000095405" description="Arginine--tRNA ligase">
    <location>
        <begin position="1"/>
        <end position="577"/>
    </location>
</feature>
<feature type="short sequence motif" description="'HIGH' region">
    <location>
        <begin position="122"/>
        <end position="132"/>
    </location>
</feature>
<organism>
    <name type="scientific">Salmonella schwarzengrund (strain CVM19633)</name>
    <dbReference type="NCBI Taxonomy" id="439843"/>
    <lineage>
        <taxon>Bacteria</taxon>
        <taxon>Pseudomonadati</taxon>
        <taxon>Pseudomonadota</taxon>
        <taxon>Gammaproteobacteria</taxon>
        <taxon>Enterobacterales</taxon>
        <taxon>Enterobacteriaceae</taxon>
        <taxon>Salmonella</taxon>
    </lineage>
</organism>
<keyword id="KW-0030">Aminoacyl-tRNA synthetase</keyword>
<keyword id="KW-0067">ATP-binding</keyword>
<keyword id="KW-0963">Cytoplasm</keyword>
<keyword id="KW-0436">Ligase</keyword>
<keyword id="KW-0547">Nucleotide-binding</keyword>
<keyword id="KW-0648">Protein biosynthesis</keyword>